<protein>
    <recommendedName>
        <fullName>Probable pyruvate-flavodoxin oxidoreductase</fullName>
        <ecNumber>1.2.7.-</ecNumber>
    </recommendedName>
</protein>
<reference key="1">
    <citation type="journal article" date="1996" name="DNA Res.">
        <title>A 570-kb DNA sequence of the Escherichia coli K-12 genome corresponding to the 28.0-40.1 min region on the linkage map.</title>
        <authorList>
            <person name="Aiba H."/>
            <person name="Baba T."/>
            <person name="Fujita K."/>
            <person name="Hayashi K."/>
            <person name="Inada T."/>
            <person name="Isono K."/>
            <person name="Itoh T."/>
            <person name="Kasai H."/>
            <person name="Kashimoto K."/>
            <person name="Kimura S."/>
            <person name="Kitakawa M."/>
            <person name="Kitagawa M."/>
            <person name="Makino K."/>
            <person name="Miki T."/>
            <person name="Mizobuchi K."/>
            <person name="Mori H."/>
            <person name="Mori T."/>
            <person name="Motomura K."/>
            <person name="Nakade S."/>
            <person name="Nakamura Y."/>
            <person name="Nashimoto H."/>
            <person name="Nishio Y."/>
            <person name="Oshima T."/>
            <person name="Saito N."/>
            <person name="Sampei G."/>
            <person name="Seki Y."/>
            <person name="Sivasundaram S."/>
            <person name="Tagami H."/>
            <person name="Takeda J."/>
            <person name="Takemoto K."/>
            <person name="Takeuchi Y."/>
            <person name="Wada C."/>
            <person name="Yamamoto Y."/>
            <person name="Horiuchi T."/>
        </authorList>
    </citation>
    <scope>NUCLEOTIDE SEQUENCE [LARGE SCALE GENOMIC DNA]</scope>
    <source>
        <strain>K12 / W3110 / ATCC 27325 / DSM 5911</strain>
    </source>
</reference>
<reference key="2">
    <citation type="journal article" date="1997" name="Science">
        <title>The complete genome sequence of Escherichia coli K-12.</title>
        <authorList>
            <person name="Blattner F.R."/>
            <person name="Plunkett G. III"/>
            <person name="Bloch C.A."/>
            <person name="Perna N.T."/>
            <person name="Burland V."/>
            <person name="Riley M."/>
            <person name="Collado-Vides J."/>
            <person name="Glasner J.D."/>
            <person name="Rode C.K."/>
            <person name="Mayhew G.F."/>
            <person name="Gregor J."/>
            <person name="Davis N.W."/>
            <person name="Kirkpatrick H.A."/>
            <person name="Goeden M.A."/>
            <person name="Rose D.J."/>
            <person name="Mau B."/>
            <person name="Shao Y."/>
        </authorList>
    </citation>
    <scope>NUCLEOTIDE SEQUENCE [LARGE SCALE GENOMIC DNA]</scope>
    <source>
        <strain>K12 / MG1655 / ATCC 47076</strain>
    </source>
</reference>
<reference key="3">
    <citation type="journal article" date="2006" name="Mol. Syst. Biol.">
        <title>Highly accurate genome sequences of Escherichia coli K-12 strains MG1655 and W3110.</title>
        <authorList>
            <person name="Hayashi K."/>
            <person name="Morooka N."/>
            <person name="Yamamoto Y."/>
            <person name="Fujita K."/>
            <person name="Isono K."/>
            <person name="Choi S."/>
            <person name="Ohtsubo E."/>
            <person name="Baba T."/>
            <person name="Wanner B.L."/>
            <person name="Mori H."/>
            <person name="Horiuchi T."/>
        </authorList>
    </citation>
    <scope>NUCLEOTIDE SEQUENCE [LARGE SCALE GENOMIC DNA]</scope>
    <source>
        <strain>K12 / W3110 / ATCC 27325 / DSM 5911</strain>
    </source>
</reference>
<reference key="4">
    <citation type="journal article" date="1997" name="Microbiology">
        <title>The ldhA gene encoding the fermentative lactate dehydrogenase of Escherichia coli.</title>
        <authorList>
            <person name="Bunch P.K."/>
            <person name="Mat-Jan F."/>
            <person name="Lee N."/>
            <person name="Clark D.P."/>
        </authorList>
    </citation>
    <scope>NUCLEOTIDE SEQUENCE [GENOMIC DNA] OF 1-53</scope>
    <source>
        <strain>K12</strain>
    </source>
</reference>
<reference key="5">
    <citation type="unpublished observations" date="1996-03">
        <authorList>
            <person name="Rudd K.E."/>
        </authorList>
    </citation>
    <scope>IDENTIFICATION</scope>
</reference>
<feature type="chain" id="PRO_0000215557" description="Probable pyruvate-flavodoxin oxidoreductase">
    <location>
        <begin position="1"/>
        <end position="1174"/>
    </location>
</feature>
<feature type="domain" description="4Fe-4S ferredoxin-type 1" evidence="2">
    <location>
        <begin position="680"/>
        <end position="709"/>
    </location>
</feature>
<feature type="domain" description="4Fe-4S ferredoxin-type 2" evidence="2">
    <location>
        <begin position="736"/>
        <end position="765"/>
    </location>
</feature>
<feature type="binding site" evidence="1">
    <location>
        <position position="689"/>
    </location>
    <ligand>
        <name>[4Fe-4S] cluster</name>
        <dbReference type="ChEBI" id="CHEBI:49883"/>
        <label>1</label>
    </ligand>
</feature>
<feature type="binding site" evidence="1">
    <location>
        <position position="692"/>
    </location>
    <ligand>
        <name>[4Fe-4S] cluster</name>
        <dbReference type="ChEBI" id="CHEBI:49883"/>
        <label>1</label>
    </ligand>
</feature>
<feature type="binding site" evidence="1">
    <location>
        <position position="695"/>
    </location>
    <ligand>
        <name>[4Fe-4S] cluster</name>
        <dbReference type="ChEBI" id="CHEBI:49883"/>
        <label>1</label>
    </ligand>
</feature>
<feature type="binding site" evidence="1">
    <location>
        <position position="699"/>
    </location>
    <ligand>
        <name>[4Fe-4S] cluster</name>
        <dbReference type="ChEBI" id="CHEBI:49883"/>
        <label>2</label>
    </ligand>
</feature>
<feature type="binding site" evidence="1">
    <location>
        <position position="745"/>
    </location>
    <ligand>
        <name>[4Fe-4S] cluster</name>
        <dbReference type="ChEBI" id="CHEBI:49883"/>
        <label>2</label>
    </ligand>
</feature>
<feature type="binding site" evidence="1">
    <location>
        <position position="748"/>
    </location>
    <ligand>
        <name>[4Fe-4S] cluster</name>
        <dbReference type="ChEBI" id="CHEBI:49883"/>
        <label>2</label>
    </ligand>
</feature>
<feature type="binding site" evidence="1">
    <location>
        <position position="751"/>
    </location>
    <ligand>
        <name>[4Fe-4S] cluster</name>
        <dbReference type="ChEBI" id="CHEBI:49883"/>
        <label>2</label>
    </ligand>
</feature>
<feature type="binding site" evidence="1">
    <location>
        <position position="755"/>
    </location>
    <ligand>
        <name>[4Fe-4S] cluster</name>
        <dbReference type="ChEBI" id="CHEBI:49883"/>
        <label>1</label>
    </ligand>
</feature>
<feature type="binding site" evidence="1">
    <location>
        <position position="819"/>
    </location>
    <ligand>
        <name>[4Fe-4S] cluster</name>
        <dbReference type="ChEBI" id="CHEBI:49883"/>
        <label>3</label>
    </ligand>
</feature>
<feature type="binding site" evidence="1">
    <location>
        <position position="822"/>
    </location>
    <ligand>
        <name>[4Fe-4S] cluster</name>
        <dbReference type="ChEBI" id="CHEBI:49883"/>
        <label>3</label>
    </ligand>
</feature>
<feature type="binding site" evidence="1">
    <location>
        <position position="847"/>
    </location>
    <ligand>
        <name>[4Fe-4S] cluster</name>
        <dbReference type="ChEBI" id="CHEBI:49883"/>
        <label>3</label>
    </ligand>
</feature>
<feature type="binding site" evidence="1">
    <location>
        <position position="1071"/>
    </location>
    <ligand>
        <name>[4Fe-4S] cluster</name>
        <dbReference type="ChEBI" id="CHEBI:49883"/>
        <label>3</label>
    </ligand>
</feature>
<feature type="sequence conflict" description="In Ref. 4." evidence="3" ref="4">
    <original>A</original>
    <variation>R</variation>
    <location>
        <position position="40"/>
    </location>
</feature>
<feature type="sequence conflict" description="In Ref. 4." evidence="3" ref="4">
    <original>T</original>
    <variation>S</variation>
    <location>
        <position position="51"/>
    </location>
</feature>
<organism>
    <name type="scientific">Escherichia coli (strain K12)</name>
    <dbReference type="NCBI Taxonomy" id="83333"/>
    <lineage>
        <taxon>Bacteria</taxon>
        <taxon>Pseudomonadati</taxon>
        <taxon>Pseudomonadota</taxon>
        <taxon>Gammaproteobacteria</taxon>
        <taxon>Enterobacterales</taxon>
        <taxon>Enterobacteriaceae</taxon>
        <taxon>Escherichia</taxon>
    </lineage>
</organism>
<sequence>MITIDGNGAVASVAFRTSEVIAIYPITPSSTMAEQADAWAGNGLKNVWGDTPRVVEMQSEAGAIATVHGALQTGALSTSFTSSQGLLLMIPTLYKLAGELTPFVLHVAARTVATHALSIFGDHSDVMAVRQTGCAMLCAANVQEAQDFALISQIATLKSRVPFIHFFDGFRTSHEINKIVPLADDTILDLMPQVEIDAHRARALNPEHPVIRGTSANPDTYFQSREATNPWYNAVYDHVEQAMNDFSAATGRQYQPFEYYGHPQAERVIILMGSAIGTCEEVVDELLTRGEKVGVLKVRLYRPFSAKHLLQALPGSVRSVAVLDRTKEPGAQAEPLYLDVMTALAEAFNNGERETLPRVIGGRYGLSSKEFGPDCVLAVFAELNAAKPKARFTVGIYDDVTNLSLPLPENTLPNSAKLEALFYGLGSDGSVSATKNNIKIIGNSTPWYAQGYFVYDSKKAGGLTVSHLRVSEQPIRSAYLISQADFVGCHQLQFIDKYQMAERLKPGGIFLLNTPYSADEVWSRLPQEVQAVLNQKKARFYVINAAKIARECGLAARINTVMQMAFFHLTQILPGDSALAELQGAIAKSYSSKGQDLVERNWQALALARESVEEVPLQPVNPHSANRPPVVSDAAPDFVKTVTAAMLAGLGDALPVSALPPDGTWPMGTTRWEKRNIAEEIPIWKEELCTQCNHCVAACPHSAIRAKVVPPEAMENAPASLHSLDVKSRDMRGQKYVLQVAPEDCTGCNLCVEVCPAKDRQNPEIKAINMMSRLEHVEEEKINYDFFLNLPEIDRSKLERIDIRTSQLITPLFEYSGACSGCGETPYIKLLTQLYGDRMLIANATGCSSIYGGNLPSTPYTTDANGRGPAWANSLFEDNAEFGLGFRLTVDQHRVRVLRLLDQFADKIPAELLTALKSDATPEVRREQVAALRQQLNDVAEAHELLRDADALVEKSIWLIGGDGWAYDIGFGGLDHVLSLTENVNILVLDTQCYSNTGGQASKATPLGAVTKFGEHGKRKARKDLGVSMMMYGHVYVAQISLGAQLNQTVKAIQEAEAYPGPSLIIAYSPCEEHGYDLALSHDQMRQLTATGFWPLYRFDPRRADEGKLPLALDSRPPSEAPEETLLHEQRFRRLNSQQPEVAEQLWKDAAADLQKRYDFLAQMAGKAEKSNTD</sequence>
<accession>P52647</accession>
<accession>P77238</accession>
<comment type="function">
    <text evidence="3">Oxidoreductase required for the transfer of electrons from pyruvate to flavodoxin.</text>
</comment>
<comment type="catalytic activity">
    <reaction>
        <text>oxidized [flavodoxin] + pyruvate + CoA + 2 H(+) = reduced [flavodoxin] + acetyl-CoA + CO2</text>
        <dbReference type="Rhea" id="RHEA:44140"/>
        <dbReference type="Rhea" id="RHEA-COMP:10622"/>
        <dbReference type="Rhea" id="RHEA-COMP:10623"/>
        <dbReference type="ChEBI" id="CHEBI:15361"/>
        <dbReference type="ChEBI" id="CHEBI:15378"/>
        <dbReference type="ChEBI" id="CHEBI:16526"/>
        <dbReference type="ChEBI" id="CHEBI:57287"/>
        <dbReference type="ChEBI" id="CHEBI:57288"/>
        <dbReference type="ChEBI" id="CHEBI:57618"/>
        <dbReference type="ChEBI" id="CHEBI:58210"/>
    </reaction>
</comment>
<comment type="cofactor">
    <cofactor evidence="1">
        <name>[4Fe-4S] cluster</name>
        <dbReference type="ChEBI" id="CHEBI:49883"/>
    </cofactor>
    <text evidence="1">Binds 3 [4Fe-4S] clusters per subunit.</text>
</comment>
<comment type="similarity">
    <text evidence="3">Belongs to the pyruvate:ferredoxin/flavodoxin oxidoreductase family.</text>
</comment>
<comment type="sequence caution" evidence="3">
    <conflict type="frameshift">
        <sequence resource="EMBL" id="U36928"/>
    </conflict>
</comment>
<name>NIFJ_ECOLI</name>
<dbReference type="EC" id="1.2.7.-"/>
<dbReference type="EMBL" id="U00096">
    <property type="protein sequence ID" value="AAC74460.1"/>
    <property type="molecule type" value="Genomic_DNA"/>
</dbReference>
<dbReference type="EMBL" id="AP009048">
    <property type="protein sequence ID" value="BAA14982.1"/>
    <property type="molecule type" value="Genomic_DNA"/>
</dbReference>
<dbReference type="EMBL" id="U36928">
    <property type="status" value="NOT_ANNOTATED_CDS"/>
    <property type="molecule type" value="Genomic_DNA"/>
</dbReference>
<dbReference type="PIR" id="E64888">
    <property type="entry name" value="E64888"/>
</dbReference>
<dbReference type="RefSeq" id="NP_415896.1">
    <property type="nucleotide sequence ID" value="NC_000913.3"/>
</dbReference>
<dbReference type="SMR" id="P52647"/>
<dbReference type="BioGRID" id="4261676">
    <property type="interactions" value="25"/>
</dbReference>
<dbReference type="DIP" id="DIP-11636N"/>
<dbReference type="FunCoup" id="P52647">
    <property type="interactions" value="186"/>
</dbReference>
<dbReference type="IntAct" id="P52647">
    <property type="interactions" value="10"/>
</dbReference>
<dbReference type="STRING" id="511145.b1378"/>
<dbReference type="DrugBank" id="DB00698">
    <property type="generic name" value="Nitrofurantoin"/>
</dbReference>
<dbReference type="jPOST" id="P52647"/>
<dbReference type="PaxDb" id="511145-b1378"/>
<dbReference type="EnsemblBacteria" id="AAC74460">
    <property type="protein sequence ID" value="AAC74460"/>
    <property type="gene ID" value="b1378"/>
</dbReference>
<dbReference type="GeneID" id="946587"/>
<dbReference type="KEGG" id="ecj:JW1372"/>
<dbReference type="KEGG" id="eco:b1378"/>
<dbReference type="KEGG" id="ecoc:C3026_08050"/>
<dbReference type="PATRIC" id="fig|511145.12.peg.1440"/>
<dbReference type="EchoBASE" id="EB2975"/>
<dbReference type="eggNOG" id="COG0674">
    <property type="taxonomic scope" value="Bacteria"/>
</dbReference>
<dbReference type="eggNOG" id="COG1013">
    <property type="taxonomic scope" value="Bacteria"/>
</dbReference>
<dbReference type="eggNOG" id="COG1014">
    <property type="taxonomic scope" value="Bacteria"/>
</dbReference>
<dbReference type="eggNOG" id="COG1143">
    <property type="taxonomic scope" value="Bacteria"/>
</dbReference>
<dbReference type="HOGENOM" id="CLU_002569_0_0_6"/>
<dbReference type="InParanoid" id="P52647"/>
<dbReference type="OMA" id="NTVMQVC"/>
<dbReference type="OrthoDB" id="9794954at2"/>
<dbReference type="PhylomeDB" id="P52647"/>
<dbReference type="BioCyc" id="EcoCyc:G6701-MONOMER"/>
<dbReference type="BioCyc" id="MetaCyc:G6701-MONOMER"/>
<dbReference type="PRO" id="PR:P52647"/>
<dbReference type="Proteomes" id="UP000000625">
    <property type="component" value="Chromosome"/>
</dbReference>
<dbReference type="GO" id="GO:0051539">
    <property type="term" value="F:4 iron, 4 sulfur cluster binding"/>
    <property type="evidence" value="ECO:0007669"/>
    <property type="project" value="UniProtKB-KW"/>
</dbReference>
<dbReference type="GO" id="GO:0005506">
    <property type="term" value="F:iron ion binding"/>
    <property type="evidence" value="ECO:0007669"/>
    <property type="project" value="InterPro"/>
</dbReference>
<dbReference type="GO" id="GO:0043873">
    <property type="term" value="F:pyruvate-flavodoxin oxidoreductase activity"/>
    <property type="evidence" value="ECO:0000314"/>
    <property type="project" value="EcoCyc"/>
</dbReference>
<dbReference type="GO" id="GO:0022900">
    <property type="term" value="P:electron transport chain"/>
    <property type="evidence" value="ECO:0007669"/>
    <property type="project" value="InterPro"/>
</dbReference>
<dbReference type="GO" id="GO:0006979">
    <property type="term" value="P:response to oxidative stress"/>
    <property type="evidence" value="ECO:0000315"/>
    <property type="project" value="EcoCyc"/>
</dbReference>
<dbReference type="CDD" id="cd03377">
    <property type="entry name" value="TPP_PFOR_PNO"/>
    <property type="match status" value="1"/>
</dbReference>
<dbReference type="CDD" id="cd07034">
    <property type="entry name" value="TPP_PYR_PFOR_IOR-alpha_like"/>
    <property type="match status" value="1"/>
</dbReference>
<dbReference type="FunFam" id="3.40.50.970:FF:000047">
    <property type="entry name" value="Probable pyruvate-flavodoxin oxidoreductase"/>
    <property type="match status" value="1"/>
</dbReference>
<dbReference type="FunFam" id="4.10.780.10:FF:000001">
    <property type="entry name" value="Probable pyruvate-flavodoxin oxidoreductase"/>
    <property type="match status" value="1"/>
</dbReference>
<dbReference type="FunFam" id="3.30.70.20:FF:000022">
    <property type="entry name" value="Pyruvate:ferredoxin (Flavodoxin) oxidoreductase"/>
    <property type="match status" value="1"/>
</dbReference>
<dbReference type="FunFam" id="3.40.50.920:FF:000007">
    <property type="entry name" value="Pyruvate:ferredoxin (Flavodoxin) oxidoreductase"/>
    <property type="match status" value="1"/>
</dbReference>
<dbReference type="FunFam" id="3.40.50.970:FF:000012">
    <property type="entry name" value="Pyruvate:ferredoxin (Flavodoxin) oxidoreductase"/>
    <property type="match status" value="1"/>
</dbReference>
<dbReference type="FunFam" id="3.40.920.10:FF:000001">
    <property type="entry name" value="Pyruvate:ferredoxin (Flavodoxin) oxidoreductase"/>
    <property type="match status" value="1"/>
</dbReference>
<dbReference type="Gene3D" id="3.30.70.20">
    <property type="match status" value="1"/>
</dbReference>
<dbReference type="Gene3D" id="3.40.50.920">
    <property type="match status" value="1"/>
</dbReference>
<dbReference type="Gene3D" id="3.40.50.970">
    <property type="match status" value="2"/>
</dbReference>
<dbReference type="Gene3D" id="3.40.920.10">
    <property type="entry name" value="Pyruvate-ferredoxin oxidoreductase, PFOR, domain III"/>
    <property type="match status" value="1"/>
</dbReference>
<dbReference type="Gene3D" id="4.10.780.10">
    <property type="entry name" value="Pyruvate-flavodoxin oxidoreductase, EKR domain"/>
    <property type="match status" value="1"/>
</dbReference>
<dbReference type="InterPro" id="IPR017896">
    <property type="entry name" value="4Fe4S_Fe-S-bd"/>
</dbReference>
<dbReference type="InterPro" id="IPR017900">
    <property type="entry name" value="4Fe4S_Fe_S_CS"/>
</dbReference>
<dbReference type="InterPro" id="IPR033412">
    <property type="entry name" value="PFOR_II"/>
</dbReference>
<dbReference type="InterPro" id="IPR050722">
    <property type="entry name" value="Pyruvate:ferred/Flavod_OxRd"/>
</dbReference>
<dbReference type="InterPro" id="IPR037112">
    <property type="entry name" value="Pyrv-flavodox_OxR_EKR_sf"/>
</dbReference>
<dbReference type="InterPro" id="IPR019456">
    <property type="entry name" value="Pyrv-flavodox_OxRtase_EKR"/>
</dbReference>
<dbReference type="InterPro" id="IPR019752">
    <property type="entry name" value="Pyrv/ketoisovalerate_OxRed_cat"/>
</dbReference>
<dbReference type="InterPro" id="IPR002880">
    <property type="entry name" value="Pyrv_Fd/Flavodoxin_OxRdtase_N"/>
</dbReference>
<dbReference type="InterPro" id="IPR011895">
    <property type="entry name" value="Pyrv_flavodox_OxRed"/>
</dbReference>
<dbReference type="InterPro" id="IPR002869">
    <property type="entry name" value="Pyrv_flavodox_OxRed_cen"/>
</dbReference>
<dbReference type="InterPro" id="IPR029061">
    <property type="entry name" value="THDP-binding"/>
</dbReference>
<dbReference type="InterPro" id="IPR009014">
    <property type="entry name" value="Transketo_C/PFOR_II"/>
</dbReference>
<dbReference type="NCBIfam" id="TIGR02176">
    <property type="entry name" value="pyruv_ox_red"/>
    <property type="match status" value="1"/>
</dbReference>
<dbReference type="PANTHER" id="PTHR32154">
    <property type="entry name" value="PYRUVATE-FLAVODOXIN OXIDOREDUCTASE-RELATED"/>
    <property type="match status" value="1"/>
</dbReference>
<dbReference type="PANTHER" id="PTHR32154:SF0">
    <property type="entry name" value="PYRUVATE-FLAVODOXIN OXIDOREDUCTASE-RELATED"/>
    <property type="match status" value="1"/>
</dbReference>
<dbReference type="Pfam" id="PF10371">
    <property type="entry name" value="EKR"/>
    <property type="match status" value="1"/>
</dbReference>
<dbReference type="Pfam" id="PF12838">
    <property type="entry name" value="Fer4_7"/>
    <property type="match status" value="1"/>
</dbReference>
<dbReference type="Pfam" id="PF17147">
    <property type="entry name" value="PFOR_II"/>
    <property type="match status" value="1"/>
</dbReference>
<dbReference type="Pfam" id="PF01558">
    <property type="entry name" value="POR"/>
    <property type="match status" value="1"/>
</dbReference>
<dbReference type="Pfam" id="PF01855">
    <property type="entry name" value="POR_N"/>
    <property type="match status" value="1"/>
</dbReference>
<dbReference type="PIRSF" id="PIRSF000159">
    <property type="entry name" value="NifJ"/>
    <property type="match status" value="1"/>
</dbReference>
<dbReference type="SMART" id="SM00890">
    <property type="entry name" value="EKR"/>
    <property type="match status" value="1"/>
</dbReference>
<dbReference type="SUPFAM" id="SSF54862">
    <property type="entry name" value="4Fe-4S ferredoxins"/>
    <property type="match status" value="1"/>
</dbReference>
<dbReference type="SUPFAM" id="SSF53323">
    <property type="entry name" value="Pyruvate-ferredoxin oxidoreductase, PFOR, domain III"/>
    <property type="match status" value="1"/>
</dbReference>
<dbReference type="SUPFAM" id="SSF52518">
    <property type="entry name" value="Thiamin diphosphate-binding fold (THDP-binding)"/>
    <property type="match status" value="2"/>
</dbReference>
<dbReference type="SUPFAM" id="SSF52922">
    <property type="entry name" value="TK C-terminal domain-like"/>
    <property type="match status" value="1"/>
</dbReference>
<dbReference type="PROSITE" id="PS00198">
    <property type="entry name" value="4FE4S_FER_1"/>
    <property type="match status" value="2"/>
</dbReference>
<dbReference type="PROSITE" id="PS51379">
    <property type="entry name" value="4FE4S_FER_2"/>
    <property type="match status" value="2"/>
</dbReference>
<gene>
    <name type="primary">ydbK</name>
    <name type="ordered locus">b1378</name>
    <name type="ordered locus">JW1372</name>
</gene>
<evidence type="ECO:0000250" key="1">
    <source>
        <dbReference type="UniProtKB" id="P94692"/>
    </source>
</evidence>
<evidence type="ECO:0000255" key="2">
    <source>
        <dbReference type="PROSITE-ProRule" id="PRU00711"/>
    </source>
</evidence>
<evidence type="ECO:0000305" key="3"/>
<keyword id="KW-0004">4Fe-4S</keyword>
<keyword id="KW-0249">Electron transport</keyword>
<keyword id="KW-0408">Iron</keyword>
<keyword id="KW-0411">Iron-sulfur</keyword>
<keyword id="KW-0479">Metal-binding</keyword>
<keyword id="KW-0560">Oxidoreductase</keyword>
<keyword id="KW-1185">Reference proteome</keyword>
<keyword id="KW-0677">Repeat</keyword>
<keyword id="KW-0813">Transport</keyword>
<proteinExistence type="inferred from homology"/>